<name>Y1776_AQUAE</name>
<organism>
    <name type="scientific">Aquifex aeolicus (strain VF5)</name>
    <dbReference type="NCBI Taxonomy" id="224324"/>
    <lineage>
        <taxon>Bacteria</taxon>
        <taxon>Pseudomonadati</taxon>
        <taxon>Aquificota</taxon>
        <taxon>Aquificia</taxon>
        <taxon>Aquificales</taxon>
        <taxon>Aquificaceae</taxon>
        <taxon>Aquifex</taxon>
    </lineage>
</organism>
<feature type="chain" id="PRO_0000186943" description="Uncharacterized protein aq_1776">
    <location>
        <begin position="1"/>
        <end position="236"/>
    </location>
</feature>
<dbReference type="EMBL" id="AE000657">
    <property type="protein sequence ID" value="AAC07623.1"/>
    <property type="molecule type" value="Genomic_DNA"/>
</dbReference>
<dbReference type="PIR" id="B70453">
    <property type="entry name" value="B70453"/>
</dbReference>
<dbReference type="RefSeq" id="NP_214218.1">
    <property type="nucleotide sequence ID" value="NC_000918.1"/>
</dbReference>
<dbReference type="RefSeq" id="WP_010881155.1">
    <property type="nucleotide sequence ID" value="NC_000918.1"/>
</dbReference>
<dbReference type="SMR" id="O67652"/>
<dbReference type="EnsemblBacteria" id="AAC07623">
    <property type="protein sequence ID" value="AAC07623"/>
    <property type="gene ID" value="aq_1776"/>
</dbReference>
<dbReference type="KEGG" id="aae:aq_1776"/>
<dbReference type="PATRIC" id="fig|224324.8.peg.1373"/>
<dbReference type="eggNOG" id="ENOG502Z8K1">
    <property type="taxonomic scope" value="Bacteria"/>
</dbReference>
<dbReference type="HOGENOM" id="CLU_1266342_0_0_0"/>
<dbReference type="InParanoid" id="O67652"/>
<dbReference type="OrthoDB" id="1721873at2"/>
<dbReference type="Proteomes" id="UP000000798">
    <property type="component" value="Chromosome"/>
</dbReference>
<dbReference type="InterPro" id="IPR029062">
    <property type="entry name" value="Class_I_gatase-like"/>
</dbReference>
<dbReference type="SUPFAM" id="SSF52317">
    <property type="entry name" value="Class I glutamine amidotransferase-like"/>
    <property type="match status" value="1"/>
</dbReference>
<gene>
    <name type="ordered locus">aq_1776</name>
</gene>
<reference key="1">
    <citation type="journal article" date="1998" name="Nature">
        <title>The complete genome of the hyperthermophilic bacterium Aquifex aeolicus.</title>
        <authorList>
            <person name="Deckert G."/>
            <person name="Warren P.V."/>
            <person name="Gaasterland T."/>
            <person name="Young W.G."/>
            <person name="Lenox A.L."/>
            <person name="Graham D.E."/>
            <person name="Overbeek R."/>
            <person name="Snead M.A."/>
            <person name="Keller M."/>
            <person name="Aujay M."/>
            <person name="Huber R."/>
            <person name="Feldman R.A."/>
            <person name="Short J.M."/>
            <person name="Olsen G.J."/>
            <person name="Swanson R.V."/>
        </authorList>
    </citation>
    <scope>NUCLEOTIDE SEQUENCE [LARGE SCALE GENOMIC DNA]</scope>
    <source>
        <strain>VF5</strain>
    </source>
</reference>
<sequence length="236" mass="26959">MSVKVGWDITHQEFTITDYYYFSILQREAEKAGIEIDEVNDWESLNKYDVIVFNYPEIPFTESEVKDVERWVWKDGKKVILAGYYKNEDRIADTCNTLARAFGMELNPDEVTDEVNNHNGDKYFVVTSKIRRYNKNDKNEVNVEKIVLACTASIKPIMPDTKIVARGEDTAKSNMGNYPLLIAEQIAPPSGGYFCLAGTCVFWDNYSITLYDNLNFSLNLLRHVPPSKGTKLTIGP</sequence>
<proteinExistence type="predicted"/>
<accession>O67652</accession>
<keyword id="KW-1185">Reference proteome</keyword>
<protein>
    <recommendedName>
        <fullName>Uncharacterized protein aq_1776</fullName>
    </recommendedName>
</protein>